<comment type="interaction">
    <interactant intactId="EBI-746224">
        <id>Q49AR2</id>
    </interactant>
    <interactant intactId="EBI-742054">
        <id>Q96D03</id>
        <label>DDIT4L</label>
    </interactant>
    <organismsDiffer>false</organismsDiffer>
    <experiments>3</experiments>
</comment>
<comment type="interaction">
    <interactant intactId="EBI-746224">
        <id>Q49AR2</id>
    </interactant>
    <interactant intactId="EBI-714648">
        <id>P60002</id>
        <label>ELOF1</label>
    </interactant>
    <organismsDiffer>false</organismsDiffer>
    <experiments>6</experiments>
</comment>
<comment type="interaction">
    <interactant intactId="EBI-746224">
        <id>Q49AR2</id>
    </interactant>
    <interactant intactId="EBI-714455">
        <id>Q9Y2W2</id>
        <label>WBP11</label>
    </interactant>
    <organismsDiffer>false</organismsDiffer>
    <experiments>6</experiments>
</comment>
<comment type="alternative products">
    <event type="alternative splicing"/>
    <isoform>
        <id>Q49AR2-1</id>
        <name>1</name>
        <sequence type="displayed"/>
    </isoform>
    <isoform>
        <id>Q49AR2-2</id>
        <name>2</name>
        <sequence type="described" ref="VSP_028183"/>
    </isoform>
    <isoform>
        <id>Q49AR2-3</id>
        <name>3</name>
        <sequence type="described" ref="VSP_028182 VSP_028184"/>
    </isoform>
</comment>
<comment type="similarity">
    <text evidence="4">Belongs to the UPF0489 family.</text>
</comment>
<feature type="chain" id="PRO_0000305002" description="UPF0489 protein C5orf22">
    <location>
        <begin position="1"/>
        <end position="442"/>
    </location>
</feature>
<feature type="region of interest" description="Disordered" evidence="1">
    <location>
        <begin position="175"/>
        <end position="210"/>
    </location>
</feature>
<feature type="compositionally biased region" description="Polar residues" evidence="1">
    <location>
        <begin position="189"/>
        <end position="200"/>
    </location>
</feature>
<feature type="splice variant" id="VSP_028182" description="In isoform 3." evidence="3">
    <location>
        <begin position="1"/>
        <end position="279"/>
    </location>
</feature>
<feature type="splice variant" id="VSP_028183" description="In isoform 2." evidence="2">
    <location>
        <begin position="1"/>
        <end position="265"/>
    </location>
</feature>
<feature type="splice variant" id="VSP_028184" description="In isoform 3." evidence="3">
    <original>QFKKPGTNLTEEDLVDIVDTRIHQLEDLEATFADLCDGDDEETVQRWASNPGMESLVPLVQSLKKRMEVPDYEM</original>
    <variation>MEVPDYEMFPASSSSPSETTSAWISLSMSLSAFWSKPFNKSLGSSKLSNISLPSSEPSKLFQPLPVPKLLPHFQ</variation>
    <location>
        <begin position="280"/>
        <end position="353"/>
    </location>
</feature>
<feature type="sequence variant" id="VAR_035149" description="In dbSNP:rs17410000.">
    <original>T</original>
    <variation>P</variation>
    <location>
        <position position="235"/>
    </location>
</feature>
<feature type="sequence variant" id="VAR_035150" description="In dbSNP:rs16901277.">
    <original>D</original>
    <variation>E</variation>
    <location>
        <position position="405"/>
    </location>
</feature>
<feature type="sequence conflict" description="In Ref. 1; BAA92060." evidence="4" ref="1">
    <original>S</original>
    <variation>P</variation>
    <location>
        <position position="199"/>
    </location>
</feature>
<dbReference type="EMBL" id="AK002055">
    <property type="protein sequence ID" value="BAA92060.1"/>
    <property type="molecule type" value="mRNA"/>
</dbReference>
<dbReference type="EMBL" id="AL834427">
    <property type="protein sequence ID" value="CAD39088.2"/>
    <property type="molecule type" value="mRNA"/>
</dbReference>
<dbReference type="EMBL" id="CH471118">
    <property type="protein sequence ID" value="EAX10771.1"/>
    <property type="molecule type" value="Genomic_DNA"/>
</dbReference>
<dbReference type="EMBL" id="CH471118">
    <property type="protein sequence ID" value="EAX10772.1"/>
    <property type="molecule type" value="Genomic_DNA"/>
</dbReference>
<dbReference type="EMBL" id="BC021215">
    <property type="protein sequence ID" value="AAH21215.1"/>
    <property type="molecule type" value="mRNA"/>
</dbReference>
<dbReference type="EMBL" id="BC032845">
    <property type="protein sequence ID" value="AAH32845.1"/>
    <property type="molecule type" value="mRNA"/>
</dbReference>
<dbReference type="CCDS" id="CCDS3895.1">
    <molecule id="Q49AR2-1"/>
</dbReference>
<dbReference type="RefSeq" id="NP_060826.2">
    <molecule id="Q49AR2-1"/>
    <property type="nucleotide sequence ID" value="NM_018356.3"/>
</dbReference>
<dbReference type="RefSeq" id="XP_006714543.1">
    <molecule id="Q49AR2-2"/>
    <property type="nucleotide sequence ID" value="XM_006714480.4"/>
</dbReference>
<dbReference type="RefSeq" id="XP_016865102.1">
    <property type="nucleotide sequence ID" value="XM_017009613.1"/>
</dbReference>
<dbReference type="RefSeq" id="XP_016865103.1">
    <property type="nucleotide sequence ID" value="XM_017009614.1"/>
</dbReference>
<dbReference type="RefSeq" id="XP_016865104.1">
    <property type="nucleotide sequence ID" value="XM_017009615.1"/>
</dbReference>
<dbReference type="RefSeq" id="XP_016865105.1">
    <property type="nucleotide sequence ID" value="XM_017009616.1"/>
</dbReference>
<dbReference type="RefSeq" id="XP_054208866.1">
    <molecule id="Q49AR2-2"/>
    <property type="nucleotide sequence ID" value="XM_054352891.1"/>
</dbReference>
<dbReference type="SMR" id="Q49AR2"/>
<dbReference type="BioGRID" id="120603">
    <property type="interactions" value="30"/>
</dbReference>
<dbReference type="FunCoup" id="Q49AR2">
    <property type="interactions" value="2524"/>
</dbReference>
<dbReference type="IntAct" id="Q49AR2">
    <property type="interactions" value="14"/>
</dbReference>
<dbReference type="STRING" id="9606.ENSP00000326879"/>
<dbReference type="GlyGen" id="Q49AR2">
    <property type="glycosylation" value="1 site, 1 O-linked glycan (1 site)"/>
</dbReference>
<dbReference type="iPTMnet" id="Q49AR2"/>
<dbReference type="PhosphoSitePlus" id="Q49AR2"/>
<dbReference type="BioMuta" id="C5orf22"/>
<dbReference type="jPOST" id="Q49AR2"/>
<dbReference type="MassIVE" id="Q49AR2"/>
<dbReference type="PaxDb" id="9606-ENSP00000326879"/>
<dbReference type="PeptideAtlas" id="Q49AR2"/>
<dbReference type="ProteomicsDB" id="62065">
    <molecule id="Q49AR2-1"/>
</dbReference>
<dbReference type="ProteomicsDB" id="62066">
    <molecule id="Q49AR2-2"/>
</dbReference>
<dbReference type="ProteomicsDB" id="62067">
    <molecule id="Q49AR2-3"/>
</dbReference>
<dbReference type="Pumba" id="Q49AR2"/>
<dbReference type="Antibodypedia" id="51883">
    <property type="antibodies" value="60 antibodies from 13 providers"/>
</dbReference>
<dbReference type="DNASU" id="55322"/>
<dbReference type="Ensembl" id="ENST00000325366.14">
    <molecule id="Q49AR2-1"/>
    <property type="protein sequence ID" value="ENSP00000326879.9"/>
    <property type="gene ID" value="ENSG00000082213.18"/>
</dbReference>
<dbReference type="GeneID" id="55322"/>
<dbReference type="KEGG" id="hsa:55322"/>
<dbReference type="MANE-Select" id="ENST00000325366.14">
    <property type="protein sequence ID" value="ENSP00000326879.9"/>
    <property type="RefSeq nucleotide sequence ID" value="NM_018356.3"/>
    <property type="RefSeq protein sequence ID" value="NP_060826.2"/>
</dbReference>
<dbReference type="UCSC" id="uc003jhj.4">
    <molecule id="Q49AR2-1"/>
    <property type="organism name" value="human"/>
</dbReference>
<dbReference type="AGR" id="HGNC:25639"/>
<dbReference type="CTD" id="55322"/>
<dbReference type="DisGeNET" id="55322"/>
<dbReference type="GeneCards" id="C5orf22"/>
<dbReference type="HGNC" id="HGNC:25639">
    <property type="gene designation" value="C5orf22"/>
</dbReference>
<dbReference type="HPA" id="ENSG00000082213">
    <property type="expression patterns" value="Low tissue specificity"/>
</dbReference>
<dbReference type="neXtProt" id="NX_Q49AR2"/>
<dbReference type="OpenTargets" id="ENSG00000082213"/>
<dbReference type="PharmGKB" id="PA144596503"/>
<dbReference type="VEuPathDB" id="HostDB:ENSG00000082213"/>
<dbReference type="eggNOG" id="ENOG502QW2U">
    <property type="taxonomic scope" value="Eukaryota"/>
</dbReference>
<dbReference type="GeneTree" id="ENSGT00390000001801"/>
<dbReference type="HOGENOM" id="CLU_046339_0_0_1"/>
<dbReference type="InParanoid" id="Q49AR2"/>
<dbReference type="OMA" id="RIFWHLE"/>
<dbReference type="OrthoDB" id="418142at2759"/>
<dbReference type="PAN-GO" id="Q49AR2">
    <property type="GO annotations" value="0 GO annotations based on evolutionary models"/>
</dbReference>
<dbReference type="PhylomeDB" id="Q49AR2"/>
<dbReference type="TreeFam" id="TF324160"/>
<dbReference type="PathwayCommons" id="Q49AR2"/>
<dbReference type="SignaLink" id="Q49AR2"/>
<dbReference type="BioGRID-ORCS" id="55322">
    <property type="hits" value="18 hits in 1134 CRISPR screens"/>
</dbReference>
<dbReference type="ChiTaRS" id="C5orf22">
    <property type="organism name" value="human"/>
</dbReference>
<dbReference type="GenomeRNAi" id="55322"/>
<dbReference type="Pharos" id="Q49AR2">
    <property type="development level" value="Tdark"/>
</dbReference>
<dbReference type="PRO" id="PR:Q49AR2"/>
<dbReference type="Proteomes" id="UP000005640">
    <property type="component" value="Chromosome 5"/>
</dbReference>
<dbReference type="RNAct" id="Q49AR2">
    <property type="molecule type" value="protein"/>
</dbReference>
<dbReference type="Bgee" id="ENSG00000082213">
    <property type="expression patterns" value="Expressed in secondary oocyte and 208 other cell types or tissues"/>
</dbReference>
<dbReference type="ExpressionAtlas" id="Q49AR2">
    <property type="expression patterns" value="baseline and differential"/>
</dbReference>
<dbReference type="InterPro" id="IPR024131">
    <property type="entry name" value="UPF0489"/>
</dbReference>
<dbReference type="PANTHER" id="PTHR13225">
    <property type="entry name" value="MISEXPRESSION SUPPRESSOR OF RAS 6"/>
    <property type="match status" value="1"/>
</dbReference>
<dbReference type="PANTHER" id="PTHR13225:SF3">
    <property type="entry name" value="UPF0489 PROTEIN C5ORF22"/>
    <property type="match status" value="1"/>
</dbReference>
<dbReference type="Pfam" id="PF12640">
    <property type="entry name" value="UPF0489"/>
    <property type="match status" value="1"/>
</dbReference>
<proteinExistence type="evidence at protein level"/>
<reference key="1">
    <citation type="journal article" date="2004" name="Nat. Genet.">
        <title>Complete sequencing and characterization of 21,243 full-length human cDNAs.</title>
        <authorList>
            <person name="Ota T."/>
            <person name="Suzuki Y."/>
            <person name="Nishikawa T."/>
            <person name="Otsuki T."/>
            <person name="Sugiyama T."/>
            <person name="Irie R."/>
            <person name="Wakamatsu A."/>
            <person name="Hayashi K."/>
            <person name="Sato H."/>
            <person name="Nagai K."/>
            <person name="Kimura K."/>
            <person name="Makita H."/>
            <person name="Sekine M."/>
            <person name="Obayashi M."/>
            <person name="Nishi T."/>
            <person name="Shibahara T."/>
            <person name="Tanaka T."/>
            <person name="Ishii S."/>
            <person name="Yamamoto J."/>
            <person name="Saito K."/>
            <person name="Kawai Y."/>
            <person name="Isono Y."/>
            <person name="Nakamura Y."/>
            <person name="Nagahari K."/>
            <person name="Murakami K."/>
            <person name="Yasuda T."/>
            <person name="Iwayanagi T."/>
            <person name="Wagatsuma M."/>
            <person name="Shiratori A."/>
            <person name="Sudo H."/>
            <person name="Hosoiri T."/>
            <person name="Kaku Y."/>
            <person name="Kodaira H."/>
            <person name="Kondo H."/>
            <person name="Sugawara M."/>
            <person name="Takahashi M."/>
            <person name="Kanda K."/>
            <person name="Yokoi T."/>
            <person name="Furuya T."/>
            <person name="Kikkawa E."/>
            <person name="Omura Y."/>
            <person name="Abe K."/>
            <person name="Kamihara K."/>
            <person name="Katsuta N."/>
            <person name="Sato K."/>
            <person name="Tanikawa M."/>
            <person name="Yamazaki M."/>
            <person name="Ninomiya K."/>
            <person name="Ishibashi T."/>
            <person name="Yamashita H."/>
            <person name="Murakawa K."/>
            <person name="Fujimori K."/>
            <person name="Tanai H."/>
            <person name="Kimata M."/>
            <person name="Watanabe M."/>
            <person name="Hiraoka S."/>
            <person name="Chiba Y."/>
            <person name="Ishida S."/>
            <person name="Ono Y."/>
            <person name="Takiguchi S."/>
            <person name="Watanabe S."/>
            <person name="Yosida M."/>
            <person name="Hotuta T."/>
            <person name="Kusano J."/>
            <person name="Kanehori K."/>
            <person name="Takahashi-Fujii A."/>
            <person name="Hara H."/>
            <person name="Tanase T.-O."/>
            <person name="Nomura Y."/>
            <person name="Togiya S."/>
            <person name="Komai F."/>
            <person name="Hara R."/>
            <person name="Takeuchi K."/>
            <person name="Arita M."/>
            <person name="Imose N."/>
            <person name="Musashino K."/>
            <person name="Yuuki H."/>
            <person name="Oshima A."/>
            <person name="Sasaki N."/>
            <person name="Aotsuka S."/>
            <person name="Yoshikawa Y."/>
            <person name="Matsunawa H."/>
            <person name="Ichihara T."/>
            <person name="Shiohata N."/>
            <person name="Sano S."/>
            <person name="Moriya S."/>
            <person name="Momiyama H."/>
            <person name="Satoh N."/>
            <person name="Takami S."/>
            <person name="Terashima Y."/>
            <person name="Suzuki O."/>
            <person name="Nakagawa S."/>
            <person name="Senoh A."/>
            <person name="Mizoguchi H."/>
            <person name="Goto Y."/>
            <person name="Shimizu F."/>
            <person name="Wakebe H."/>
            <person name="Hishigaki H."/>
            <person name="Watanabe T."/>
            <person name="Sugiyama A."/>
            <person name="Takemoto M."/>
            <person name="Kawakami B."/>
            <person name="Yamazaki M."/>
            <person name="Watanabe K."/>
            <person name="Kumagai A."/>
            <person name="Itakura S."/>
            <person name="Fukuzumi Y."/>
            <person name="Fujimori Y."/>
            <person name="Komiyama M."/>
            <person name="Tashiro H."/>
            <person name="Tanigami A."/>
            <person name="Fujiwara T."/>
            <person name="Ono T."/>
            <person name="Yamada K."/>
            <person name="Fujii Y."/>
            <person name="Ozaki K."/>
            <person name="Hirao M."/>
            <person name="Ohmori Y."/>
            <person name="Kawabata A."/>
            <person name="Hikiji T."/>
            <person name="Kobatake N."/>
            <person name="Inagaki H."/>
            <person name="Ikema Y."/>
            <person name="Okamoto S."/>
            <person name="Okitani R."/>
            <person name="Kawakami T."/>
            <person name="Noguchi S."/>
            <person name="Itoh T."/>
            <person name="Shigeta K."/>
            <person name="Senba T."/>
            <person name="Matsumura K."/>
            <person name="Nakajima Y."/>
            <person name="Mizuno T."/>
            <person name="Morinaga M."/>
            <person name="Sasaki M."/>
            <person name="Togashi T."/>
            <person name="Oyama M."/>
            <person name="Hata H."/>
            <person name="Watanabe M."/>
            <person name="Komatsu T."/>
            <person name="Mizushima-Sugano J."/>
            <person name="Satoh T."/>
            <person name="Shirai Y."/>
            <person name="Takahashi Y."/>
            <person name="Nakagawa K."/>
            <person name="Okumura K."/>
            <person name="Nagase T."/>
            <person name="Nomura N."/>
            <person name="Kikuchi H."/>
            <person name="Masuho Y."/>
            <person name="Yamashita R."/>
            <person name="Nakai K."/>
            <person name="Yada T."/>
            <person name="Nakamura Y."/>
            <person name="Ohara O."/>
            <person name="Isogai T."/>
            <person name="Sugano S."/>
        </authorList>
    </citation>
    <scope>NUCLEOTIDE SEQUENCE [LARGE SCALE MRNA] (ISOFORM 1)</scope>
    <source>
        <tissue>Placenta</tissue>
    </source>
</reference>
<reference key="2">
    <citation type="journal article" date="2007" name="BMC Genomics">
        <title>The full-ORF clone resource of the German cDNA consortium.</title>
        <authorList>
            <person name="Bechtel S."/>
            <person name="Rosenfelder H."/>
            <person name="Duda A."/>
            <person name="Schmidt C.P."/>
            <person name="Ernst U."/>
            <person name="Wellenreuther R."/>
            <person name="Mehrle A."/>
            <person name="Schuster C."/>
            <person name="Bahr A."/>
            <person name="Bloecker H."/>
            <person name="Heubner D."/>
            <person name="Hoerlein A."/>
            <person name="Michel G."/>
            <person name="Wedler H."/>
            <person name="Koehrer K."/>
            <person name="Ottenwaelder B."/>
            <person name="Poustka A."/>
            <person name="Wiemann S."/>
            <person name="Schupp I."/>
        </authorList>
    </citation>
    <scope>NUCLEOTIDE SEQUENCE [LARGE SCALE MRNA] (ISOFORM 3)</scope>
    <source>
        <tissue>Lymph node</tissue>
    </source>
</reference>
<reference key="3">
    <citation type="submission" date="2005-07" db="EMBL/GenBank/DDBJ databases">
        <authorList>
            <person name="Mural R.J."/>
            <person name="Istrail S."/>
            <person name="Sutton G.G."/>
            <person name="Florea L."/>
            <person name="Halpern A.L."/>
            <person name="Mobarry C.M."/>
            <person name="Lippert R."/>
            <person name="Walenz B."/>
            <person name="Shatkay H."/>
            <person name="Dew I."/>
            <person name="Miller J.R."/>
            <person name="Flanigan M.J."/>
            <person name="Edwards N.J."/>
            <person name="Bolanos R."/>
            <person name="Fasulo D."/>
            <person name="Halldorsson B.V."/>
            <person name="Hannenhalli S."/>
            <person name="Turner R."/>
            <person name="Yooseph S."/>
            <person name="Lu F."/>
            <person name="Nusskern D.R."/>
            <person name="Shue B.C."/>
            <person name="Zheng X.H."/>
            <person name="Zhong F."/>
            <person name="Delcher A.L."/>
            <person name="Huson D.H."/>
            <person name="Kravitz S.A."/>
            <person name="Mouchard L."/>
            <person name="Reinert K."/>
            <person name="Remington K.A."/>
            <person name="Clark A.G."/>
            <person name="Waterman M.S."/>
            <person name="Eichler E.E."/>
            <person name="Adams M.D."/>
            <person name="Hunkapiller M.W."/>
            <person name="Myers E.W."/>
            <person name="Venter J.C."/>
        </authorList>
    </citation>
    <scope>NUCLEOTIDE SEQUENCE [LARGE SCALE GENOMIC DNA]</scope>
</reference>
<reference key="4">
    <citation type="journal article" date="2004" name="Genome Res.">
        <title>The status, quality, and expansion of the NIH full-length cDNA project: the Mammalian Gene Collection (MGC).</title>
        <authorList>
            <consortium name="The MGC Project Team"/>
        </authorList>
    </citation>
    <scope>NUCLEOTIDE SEQUENCE [LARGE SCALE MRNA] (ISOFORMS 1 AND 2)</scope>
    <source>
        <tissue>Testis</tissue>
        <tissue>Uterus</tissue>
    </source>
</reference>
<reference key="5">
    <citation type="journal article" date="2008" name="Proc. Natl. Acad. Sci. U.S.A.">
        <title>A quantitative atlas of mitotic phosphorylation.</title>
        <authorList>
            <person name="Dephoure N."/>
            <person name="Zhou C."/>
            <person name="Villen J."/>
            <person name="Beausoleil S.A."/>
            <person name="Bakalarski C.E."/>
            <person name="Elledge S.J."/>
            <person name="Gygi S.P."/>
        </authorList>
    </citation>
    <scope>IDENTIFICATION BY MASS SPECTROMETRY [LARGE SCALE ANALYSIS]</scope>
    <source>
        <tissue>Cervix carcinoma</tissue>
    </source>
</reference>
<reference key="6">
    <citation type="journal article" date="2009" name="Anal. Chem.">
        <title>Lys-N and trypsin cover complementary parts of the phosphoproteome in a refined SCX-based approach.</title>
        <authorList>
            <person name="Gauci S."/>
            <person name="Helbig A.O."/>
            <person name="Slijper M."/>
            <person name="Krijgsveld J."/>
            <person name="Heck A.J."/>
            <person name="Mohammed S."/>
        </authorList>
    </citation>
    <scope>IDENTIFICATION BY MASS SPECTROMETRY [LARGE SCALE ANALYSIS]</scope>
</reference>
<gene>
    <name type="primary">C5orf22</name>
</gene>
<name>CE022_HUMAN</name>
<protein>
    <recommendedName>
        <fullName>UPF0489 protein C5orf22</fullName>
    </recommendedName>
</protein>
<accession>Q49AR2</accession>
<accession>Q8ND28</accession>
<accession>Q8WU61</accession>
<accession>Q9NUR1</accession>
<organism>
    <name type="scientific">Homo sapiens</name>
    <name type="common">Human</name>
    <dbReference type="NCBI Taxonomy" id="9606"/>
    <lineage>
        <taxon>Eukaryota</taxon>
        <taxon>Metazoa</taxon>
        <taxon>Chordata</taxon>
        <taxon>Craniata</taxon>
        <taxon>Vertebrata</taxon>
        <taxon>Euteleostomi</taxon>
        <taxon>Mammalia</taxon>
        <taxon>Eutheria</taxon>
        <taxon>Euarchontoglires</taxon>
        <taxon>Primates</taxon>
        <taxon>Haplorrhini</taxon>
        <taxon>Catarrhini</taxon>
        <taxon>Hominidae</taxon>
        <taxon>Homo</taxon>
    </lineage>
</organism>
<evidence type="ECO:0000256" key="1">
    <source>
        <dbReference type="SAM" id="MobiDB-lite"/>
    </source>
</evidence>
<evidence type="ECO:0000303" key="2">
    <source>
    </source>
</evidence>
<evidence type="ECO:0000303" key="3">
    <source>
    </source>
</evidence>
<evidence type="ECO:0000305" key="4"/>
<keyword id="KW-0025">Alternative splicing</keyword>
<keyword id="KW-1267">Proteomics identification</keyword>
<keyword id="KW-1185">Reference proteome</keyword>
<sequence>MSDSAGGRAGLRRYPKLPVWVVEDHQEVLPFIYRAIGSKHLPASNVSFLHFDSHPDLLIPVNMPADTVFDKETLFGELSIENWIMPAVYAGHFSHVIWFHPTWAQQIREGRHHFLVGKDTSTTTIRVTSTDHYFLSDGLYVPEDQLENQKPLQLDVIMVKPYKLCNNQEENDAVSSAKKPKLALEDSENTASTNCDSSSEGLEKDTATQRSDQTCLEPSCSCSSENQECQTAASTGEILEILKKGKAFVLDIDLDFFSVKNPFKEMFTQEEYKILQELYQFKKPGTNLTEEDLVDIVDTRIHQLEDLEATFADLCDGDDEETVQRWASNPGMESLVPLVQSLKKRMEVPDYEMVHQAGLTCDYSELPHHISTEQEIECLIQSVHYLLKNLPNPTLVTIARSSLDDYCPSDQVDTIQEKVLNMLRALYGNLDLQVYAAESPPS</sequence>